<reference key="1">
    <citation type="journal article" date="2001" name="Proc. Natl. Acad. Sci. U.S.A.">
        <title>Analysis of the chromosome sequence of the legume symbiont Sinorhizobium meliloti strain 1021.</title>
        <authorList>
            <person name="Capela D."/>
            <person name="Barloy-Hubler F."/>
            <person name="Gouzy J."/>
            <person name="Bothe G."/>
            <person name="Ampe F."/>
            <person name="Batut J."/>
            <person name="Boistard P."/>
            <person name="Becker A."/>
            <person name="Boutry M."/>
            <person name="Cadieu E."/>
            <person name="Dreano S."/>
            <person name="Gloux S."/>
            <person name="Godrie T."/>
            <person name="Goffeau A."/>
            <person name="Kahn D."/>
            <person name="Kiss E."/>
            <person name="Lelaure V."/>
            <person name="Masuy D."/>
            <person name="Pohl T."/>
            <person name="Portetelle D."/>
            <person name="Puehler A."/>
            <person name="Purnelle B."/>
            <person name="Ramsperger U."/>
            <person name="Renard C."/>
            <person name="Thebault P."/>
            <person name="Vandenbol M."/>
            <person name="Weidner S."/>
            <person name="Galibert F."/>
        </authorList>
    </citation>
    <scope>NUCLEOTIDE SEQUENCE [LARGE SCALE GENOMIC DNA]</scope>
    <source>
        <strain>1021</strain>
    </source>
</reference>
<reference key="2">
    <citation type="journal article" date="2001" name="Science">
        <title>The composite genome of the legume symbiont Sinorhizobium meliloti.</title>
        <authorList>
            <person name="Galibert F."/>
            <person name="Finan T.M."/>
            <person name="Long S.R."/>
            <person name="Puehler A."/>
            <person name="Abola P."/>
            <person name="Ampe F."/>
            <person name="Barloy-Hubler F."/>
            <person name="Barnett M.J."/>
            <person name="Becker A."/>
            <person name="Boistard P."/>
            <person name="Bothe G."/>
            <person name="Boutry M."/>
            <person name="Bowser L."/>
            <person name="Buhrmester J."/>
            <person name="Cadieu E."/>
            <person name="Capela D."/>
            <person name="Chain P."/>
            <person name="Cowie A."/>
            <person name="Davis R.W."/>
            <person name="Dreano S."/>
            <person name="Federspiel N.A."/>
            <person name="Fisher R.F."/>
            <person name="Gloux S."/>
            <person name="Godrie T."/>
            <person name="Goffeau A."/>
            <person name="Golding B."/>
            <person name="Gouzy J."/>
            <person name="Gurjal M."/>
            <person name="Hernandez-Lucas I."/>
            <person name="Hong A."/>
            <person name="Huizar L."/>
            <person name="Hyman R.W."/>
            <person name="Jones T."/>
            <person name="Kahn D."/>
            <person name="Kahn M.L."/>
            <person name="Kalman S."/>
            <person name="Keating D.H."/>
            <person name="Kiss E."/>
            <person name="Komp C."/>
            <person name="Lelaure V."/>
            <person name="Masuy D."/>
            <person name="Palm C."/>
            <person name="Peck M.C."/>
            <person name="Pohl T.M."/>
            <person name="Portetelle D."/>
            <person name="Purnelle B."/>
            <person name="Ramsperger U."/>
            <person name="Surzycki R."/>
            <person name="Thebault P."/>
            <person name="Vandenbol M."/>
            <person name="Vorhoelter F.J."/>
            <person name="Weidner S."/>
            <person name="Wells D.H."/>
            <person name="Wong K."/>
            <person name="Yeh K.-C."/>
            <person name="Batut J."/>
        </authorList>
    </citation>
    <scope>NUCLEOTIDE SEQUENCE [LARGE SCALE GENOMIC DNA]</scope>
    <source>
        <strain>1021</strain>
    </source>
</reference>
<gene>
    <name evidence="1" type="primary">yidC</name>
    <name type="ordered locus">R00444</name>
    <name type="ORF">SMc01721</name>
</gene>
<dbReference type="EMBL" id="AL591688">
    <property type="protein sequence ID" value="CAC41881.1"/>
    <property type="status" value="ALT_INIT"/>
    <property type="molecule type" value="Genomic_DNA"/>
</dbReference>
<dbReference type="RefSeq" id="NP_384550.1">
    <property type="nucleotide sequence ID" value="NC_003047.1"/>
</dbReference>
<dbReference type="RefSeq" id="WP_013843865.1">
    <property type="nucleotide sequence ID" value="NC_003047.1"/>
</dbReference>
<dbReference type="SMR" id="Q92SF5"/>
<dbReference type="EnsemblBacteria" id="CAC41881">
    <property type="protein sequence ID" value="CAC41881"/>
    <property type="gene ID" value="SMc01721"/>
</dbReference>
<dbReference type="GeneID" id="89574772"/>
<dbReference type="KEGG" id="sme:SMc01721"/>
<dbReference type="PATRIC" id="fig|266834.11.peg.1819"/>
<dbReference type="eggNOG" id="COG0706">
    <property type="taxonomic scope" value="Bacteria"/>
</dbReference>
<dbReference type="HOGENOM" id="CLU_016535_1_0_5"/>
<dbReference type="OrthoDB" id="9780552at2"/>
<dbReference type="Proteomes" id="UP000001976">
    <property type="component" value="Chromosome"/>
</dbReference>
<dbReference type="GO" id="GO:0005886">
    <property type="term" value="C:plasma membrane"/>
    <property type="evidence" value="ECO:0007669"/>
    <property type="project" value="UniProtKB-SubCell"/>
</dbReference>
<dbReference type="GO" id="GO:0032977">
    <property type="term" value="F:membrane insertase activity"/>
    <property type="evidence" value="ECO:0007669"/>
    <property type="project" value="InterPro"/>
</dbReference>
<dbReference type="GO" id="GO:0051205">
    <property type="term" value="P:protein insertion into membrane"/>
    <property type="evidence" value="ECO:0007669"/>
    <property type="project" value="TreeGrafter"/>
</dbReference>
<dbReference type="GO" id="GO:0015031">
    <property type="term" value="P:protein transport"/>
    <property type="evidence" value="ECO:0007669"/>
    <property type="project" value="UniProtKB-KW"/>
</dbReference>
<dbReference type="CDD" id="cd20070">
    <property type="entry name" value="5TM_YidC_Alb3"/>
    <property type="match status" value="1"/>
</dbReference>
<dbReference type="CDD" id="cd19961">
    <property type="entry name" value="EcYidC-like_peri"/>
    <property type="match status" value="1"/>
</dbReference>
<dbReference type="Gene3D" id="2.70.98.90">
    <property type="match status" value="1"/>
</dbReference>
<dbReference type="HAMAP" id="MF_01810">
    <property type="entry name" value="YidC_type1"/>
    <property type="match status" value="1"/>
</dbReference>
<dbReference type="InterPro" id="IPR019998">
    <property type="entry name" value="Membr_insert_YidC"/>
</dbReference>
<dbReference type="InterPro" id="IPR028053">
    <property type="entry name" value="Membr_insert_YidC_N"/>
</dbReference>
<dbReference type="InterPro" id="IPR001708">
    <property type="entry name" value="YidC/ALB3/OXA1/COX18"/>
</dbReference>
<dbReference type="InterPro" id="IPR028055">
    <property type="entry name" value="YidC/Oxa/ALB_C"/>
</dbReference>
<dbReference type="InterPro" id="IPR047196">
    <property type="entry name" value="YidC_ALB_C"/>
</dbReference>
<dbReference type="InterPro" id="IPR038221">
    <property type="entry name" value="YidC_periplasmic_sf"/>
</dbReference>
<dbReference type="NCBIfam" id="NF002353">
    <property type="entry name" value="PRK01318.1-4"/>
    <property type="match status" value="1"/>
</dbReference>
<dbReference type="NCBIfam" id="TIGR03593">
    <property type="entry name" value="yidC_nterm"/>
    <property type="match status" value="1"/>
</dbReference>
<dbReference type="NCBIfam" id="TIGR03592">
    <property type="entry name" value="yidC_oxa1_cterm"/>
    <property type="match status" value="1"/>
</dbReference>
<dbReference type="PANTHER" id="PTHR12428:SF65">
    <property type="entry name" value="CYTOCHROME C OXIDASE ASSEMBLY PROTEIN COX18, MITOCHONDRIAL"/>
    <property type="match status" value="1"/>
</dbReference>
<dbReference type="PANTHER" id="PTHR12428">
    <property type="entry name" value="OXA1"/>
    <property type="match status" value="1"/>
</dbReference>
<dbReference type="Pfam" id="PF02096">
    <property type="entry name" value="60KD_IMP"/>
    <property type="match status" value="1"/>
</dbReference>
<dbReference type="Pfam" id="PF14849">
    <property type="entry name" value="YidC_periplas"/>
    <property type="match status" value="1"/>
</dbReference>
<dbReference type="PRINTS" id="PR00701">
    <property type="entry name" value="60KDINNERMP"/>
</dbReference>
<dbReference type="PRINTS" id="PR01900">
    <property type="entry name" value="YIDCPROTEIN"/>
</dbReference>
<feature type="chain" id="PRO_0000124747" description="Membrane protein insertase YidC">
    <location>
        <begin position="1"/>
        <end position="594"/>
    </location>
</feature>
<feature type="transmembrane region" description="Helical" evidence="1">
    <location>
        <begin position="7"/>
        <end position="27"/>
    </location>
</feature>
<feature type="transmembrane region" description="Helical" evidence="1">
    <location>
        <begin position="369"/>
        <end position="389"/>
    </location>
</feature>
<feature type="transmembrane region" description="Helical" evidence="1">
    <location>
        <begin position="443"/>
        <end position="463"/>
    </location>
</feature>
<feature type="transmembrane region" description="Helical" evidence="1">
    <location>
        <begin position="488"/>
        <end position="508"/>
    </location>
</feature>
<feature type="transmembrane region" description="Helical" evidence="1">
    <location>
        <begin position="532"/>
        <end position="552"/>
    </location>
</feature>
<feature type="region of interest" description="Disordered" evidence="2">
    <location>
        <begin position="36"/>
        <end position="73"/>
    </location>
</feature>
<feature type="compositionally biased region" description="Low complexity" evidence="2">
    <location>
        <begin position="37"/>
        <end position="65"/>
    </location>
</feature>
<name>YIDC_RHIME</name>
<sequence>MENNRNYFVAIALSVLILIAWQFFYVSPKMEKDRIAAEQAQQAQQTQQQPGAQPAAPGQALPGGAIPSAGESRDQAIGKSARVAIDTPALSGSINLTGARFDDLKLKGYRETVDPKSPVITLFSPAETADGYFTEIGYIGSDATGSVPGPQTTWTLSGGDKLTPSTPVTLSYTNDKGITFARTISVDDRYMFQVVDSIKNETAAPVSLSSYGRVTRFNKPTTPSIYVLHEGFVGVAGEHGLQEVGYSKVEDDEPVEPGKSTGGWLGITDKYWAATIVPPQATPFDIRFSHFADGRPRYQSDYKSDAVTVAPGQSVELKNLVFAGAKEVPVVDNYEVAYSIPNFDKLIDWGWFYFITKPMFKMMDFFFRLFGNFGIAILITTIVVKLIFFPLANKQYASMANMKKVQPKMEELKKKFGDDRMGLQQAMMQLYKEEKINPLAGCWPILIQIPVFFALYKVIYVTIEMRHAPFFGWIQDLSAPDPTTIINLFGLLPFEGPAFLHLGIWPIIMGVTMFLQMRMNPTPPDPTQAMLFTWMPVVFTFMLASFPAGLVIYWAWNNTLSILQQGIIMKRQGVKVELFDNLKSLFSKKPKPAE</sequence>
<accession>Q92SF5</accession>
<evidence type="ECO:0000255" key="1">
    <source>
        <dbReference type="HAMAP-Rule" id="MF_01810"/>
    </source>
</evidence>
<evidence type="ECO:0000256" key="2">
    <source>
        <dbReference type="SAM" id="MobiDB-lite"/>
    </source>
</evidence>
<evidence type="ECO:0000305" key="3"/>
<proteinExistence type="inferred from homology"/>
<keyword id="KW-0997">Cell inner membrane</keyword>
<keyword id="KW-1003">Cell membrane</keyword>
<keyword id="KW-0143">Chaperone</keyword>
<keyword id="KW-0472">Membrane</keyword>
<keyword id="KW-0653">Protein transport</keyword>
<keyword id="KW-1185">Reference proteome</keyword>
<keyword id="KW-0812">Transmembrane</keyword>
<keyword id="KW-1133">Transmembrane helix</keyword>
<keyword id="KW-0813">Transport</keyword>
<protein>
    <recommendedName>
        <fullName evidence="1">Membrane protein insertase YidC</fullName>
    </recommendedName>
    <alternativeName>
        <fullName evidence="1">Foldase YidC</fullName>
    </alternativeName>
    <alternativeName>
        <fullName evidence="1">Membrane integrase YidC</fullName>
    </alternativeName>
    <alternativeName>
        <fullName evidence="1">Membrane protein YidC</fullName>
    </alternativeName>
</protein>
<organism>
    <name type="scientific">Rhizobium meliloti (strain 1021)</name>
    <name type="common">Ensifer meliloti</name>
    <name type="synonym">Sinorhizobium meliloti</name>
    <dbReference type="NCBI Taxonomy" id="266834"/>
    <lineage>
        <taxon>Bacteria</taxon>
        <taxon>Pseudomonadati</taxon>
        <taxon>Pseudomonadota</taxon>
        <taxon>Alphaproteobacteria</taxon>
        <taxon>Hyphomicrobiales</taxon>
        <taxon>Rhizobiaceae</taxon>
        <taxon>Sinorhizobium/Ensifer group</taxon>
        <taxon>Sinorhizobium</taxon>
    </lineage>
</organism>
<comment type="function">
    <text evidence="1">Required for the insertion and/or proper folding and/or complex formation of integral membrane proteins into the membrane. Involved in integration of membrane proteins that insert both dependently and independently of the Sec translocase complex, as well as at least some lipoproteins. Aids folding of multispanning membrane proteins.</text>
</comment>
<comment type="subunit">
    <text evidence="1">Interacts with the Sec translocase complex via SecD. Specifically interacts with transmembrane segments of nascent integral membrane proteins during membrane integration.</text>
</comment>
<comment type="subcellular location">
    <subcellularLocation>
        <location evidence="1">Cell inner membrane</location>
        <topology evidence="1">Multi-pass membrane protein</topology>
    </subcellularLocation>
</comment>
<comment type="similarity">
    <text evidence="1">Belongs to the OXA1/ALB3/YidC family. Type 1 subfamily.</text>
</comment>
<comment type="sequence caution" evidence="3">
    <conflict type="erroneous initiation">
        <sequence resource="EMBL-CDS" id="CAC41881"/>
    </conflict>
    <text>Extended N-terminus.</text>
</comment>